<name>RL18A_STAMF</name>
<dbReference type="EMBL" id="CP000575">
    <property type="protein sequence ID" value="ABN70186.1"/>
    <property type="molecule type" value="Genomic_DNA"/>
</dbReference>
<dbReference type="RefSeq" id="WP_011839377.1">
    <property type="nucleotide sequence ID" value="NC_009033.1"/>
</dbReference>
<dbReference type="SMR" id="A3DNH6"/>
<dbReference type="STRING" id="399550.Smar_1089"/>
<dbReference type="GeneID" id="4906693"/>
<dbReference type="KEGG" id="smr:Smar_1089"/>
<dbReference type="eggNOG" id="arCOG04175">
    <property type="taxonomic scope" value="Archaea"/>
</dbReference>
<dbReference type="HOGENOM" id="CLU_177460_0_0_2"/>
<dbReference type="OrthoDB" id="191241at2157"/>
<dbReference type="Proteomes" id="UP000000254">
    <property type="component" value="Chromosome"/>
</dbReference>
<dbReference type="GO" id="GO:1990904">
    <property type="term" value="C:ribonucleoprotein complex"/>
    <property type="evidence" value="ECO:0007669"/>
    <property type="project" value="UniProtKB-KW"/>
</dbReference>
<dbReference type="GO" id="GO:0005840">
    <property type="term" value="C:ribosome"/>
    <property type="evidence" value="ECO:0007669"/>
    <property type="project" value="UniProtKB-KW"/>
</dbReference>
<dbReference type="GO" id="GO:0070180">
    <property type="term" value="F:large ribosomal subunit rRNA binding"/>
    <property type="evidence" value="ECO:0007669"/>
    <property type="project" value="UniProtKB-UniRule"/>
</dbReference>
<dbReference type="GO" id="GO:0003735">
    <property type="term" value="F:structural constituent of ribosome"/>
    <property type="evidence" value="ECO:0007669"/>
    <property type="project" value="InterPro"/>
</dbReference>
<dbReference type="GO" id="GO:0006412">
    <property type="term" value="P:translation"/>
    <property type="evidence" value="ECO:0007669"/>
    <property type="project" value="UniProtKB-UniRule"/>
</dbReference>
<dbReference type="Gene3D" id="3.10.20.10">
    <property type="match status" value="1"/>
</dbReference>
<dbReference type="HAMAP" id="MF_00273">
    <property type="entry name" value="Ribosomal_eL20"/>
    <property type="match status" value="1"/>
</dbReference>
<dbReference type="InterPro" id="IPR028877">
    <property type="entry name" value="Ribosomal_eL20"/>
</dbReference>
<dbReference type="InterPro" id="IPR023573">
    <property type="entry name" value="Ribosomal_eL20_dom"/>
</dbReference>
<dbReference type="NCBIfam" id="NF001981">
    <property type="entry name" value="PRK00773.1-1"/>
    <property type="match status" value="1"/>
</dbReference>
<dbReference type="Pfam" id="PF01775">
    <property type="entry name" value="Ribosomal_L18A"/>
    <property type="match status" value="1"/>
</dbReference>
<dbReference type="SUPFAM" id="SSF160374">
    <property type="entry name" value="RplX-like"/>
    <property type="match status" value="1"/>
</dbReference>
<organism>
    <name type="scientific">Staphylothermus marinus (strain ATCC 43588 / DSM 3639 / JCM 9404 / F1)</name>
    <dbReference type="NCBI Taxonomy" id="399550"/>
    <lineage>
        <taxon>Archaea</taxon>
        <taxon>Thermoproteota</taxon>
        <taxon>Thermoprotei</taxon>
        <taxon>Desulfurococcales</taxon>
        <taxon>Desulfurococcaceae</taxon>
        <taxon>Staphylothermus</taxon>
    </lineage>
</organism>
<comment type="subunit">
    <text evidence="1">Part of the 50S ribosomal subunit. Binds 23S rRNA.</text>
</comment>
<comment type="similarity">
    <text evidence="1">Belongs to the eukaryotic ribosomal protein eL20 family.</text>
</comment>
<gene>
    <name evidence="1" type="primary">rpl18a</name>
    <name evidence="1" type="synonym">rpl20e</name>
    <name evidence="1" type="synonym">rplX</name>
    <name type="ordered locus">Smar_1089</name>
</gene>
<keyword id="KW-1185">Reference proteome</keyword>
<keyword id="KW-0687">Ribonucleoprotein</keyword>
<keyword id="KW-0689">Ribosomal protein</keyword>
<keyword id="KW-0694">RNA-binding</keyword>
<keyword id="KW-0699">rRNA-binding</keyword>
<protein>
    <recommendedName>
        <fullName evidence="1">Large ribosomal subunit protein eL20</fullName>
    </recommendedName>
    <alternativeName>
        <fullName evidence="2">50S ribosomal protein L18Ae</fullName>
    </alternativeName>
    <alternativeName>
        <fullName evidence="1">50S ribosomal protein L20e</fullName>
    </alternativeName>
    <alternativeName>
        <fullName evidence="1">50S ribosomal protein LX</fullName>
    </alternativeName>
</protein>
<feature type="chain" id="PRO_1000003673" description="Large ribosomal subunit protein eL20">
    <location>
        <begin position="1"/>
        <end position="87"/>
    </location>
</feature>
<reference key="1">
    <citation type="journal article" date="2009" name="BMC Genomics">
        <title>The complete genome sequence of Staphylothermus marinus reveals differences in sulfur metabolism among heterotrophic Crenarchaeota.</title>
        <authorList>
            <person name="Anderson I.J."/>
            <person name="Dharmarajan L."/>
            <person name="Rodriguez J."/>
            <person name="Hooper S."/>
            <person name="Porat I."/>
            <person name="Ulrich L.E."/>
            <person name="Elkins J.G."/>
            <person name="Mavromatis K."/>
            <person name="Sun H."/>
            <person name="Land M."/>
            <person name="Lapidus A."/>
            <person name="Lucas S."/>
            <person name="Barry K."/>
            <person name="Huber H."/>
            <person name="Zhulin I.B."/>
            <person name="Whitman W.B."/>
            <person name="Mukhopadhyay B."/>
            <person name="Woese C."/>
            <person name="Bristow J."/>
            <person name="Kyrpides N."/>
        </authorList>
    </citation>
    <scope>NUCLEOTIDE SEQUENCE [LARGE SCALE GENOMIC DNA]</scope>
    <source>
        <strain>ATCC 43588 / DSM 3639 / JCM 9404 / F1</strain>
    </source>
</reference>
<reference key="2">
    <citation type="journal article" date="2009" name="Stand. Genomic Sci.">
        <title>Complete genome sequence of Staphylothermus marinus Stetter and Fiala 1986 type strain F1.</title>
        <authorList>
            <person name="Anderson I.J."/>
            <person name="Sun H."/>
            <person name="Lapidus A."/>
            <person name="Copeland A."/>
            <person name="Glavina Del Rio T."/>
            <person name="Tice H."/>
            <person name="Dalin E."/>
            <person name="Lucas S."/>
            <person name="Barry K."/>
            <person name="Land M."/>
            <person name="Richardson P."/>
            <person name="Huber H."/>
            <person name="Kyrpides N.C."/>
        </authorList>
    </citation>
    <scope>NUCLEOTIDE SEQUENCE [LARGE SCALE GENOMIC DNA]</scope>
    <source>
        <strain>ATCC 43588 / DSM 3639 / JCM 9404 / F1</strain>
    </source>
</reference>
<proteinExistence type="inferred from homology"/>
<sequence length="87" mass="10479">MSEIKIYRVEGVMLLSHDRFPVWQKFTKEVRALNKEQAIEYVYSVLGSNHKLRRKHIRITKIEEITLSEVRDRRIVALARLERFVKL</sequence>
<evidence type="ECO:0000255" key="1">
    <source>
        <dbReference type="HAMAP-Rule" id="MF_00273"/>
    </source>
</evidence>
<evidence type="ECO:0000305" key="2"/>
<accession>A3DNH6</accession>